<dbReference type="EC" id="6.1.1.21" evidence="1"/>
<dbReference type="EMBL" id="CP001217">
    <property type="protein sequence ID" value="ACJ08308.1"/>
    <property type="molecule type" value="Genomic_DNA"/>
</dbReference>
<dbReference type="SMR" id="B6JN30"/>
<dbReference type="KEGG" id="hpp:HPP12_1156"/>
<dbReference type="HOGENOM" id="CLU_025113_3_0_7"/>
<dbReference type="Proteomes" id="UP000008198">
    <property type="component" value="Chromosome"/>
</dbReference>
<dbReference type="GO" id="GO:0005737">
    <property type="term" value="C:cytoplasm"/>
    <property type="evidence" value="ECO:0007669"/>
    <property type="project" value="UniProtKB-SubCell"/>
</dbReference>
<dbReference type="GO" id="GO:0005524">
    <property type="term" value="F:ATP binding"/>
    <property type="evidence" value="ECO:0007669"/>
    <property type="project" value="UniProtKB-UniRule"/>
</dbReference>
<dbReference type="GO" id="GO:0004821">
    <property type="term" value="F:histidine-tRNA ligase activity"/>
    <property type="evidence" value="ECO:0007669"/>
    <property type="project" value="UniProtKB-UniRule"/>
</dbReference>
<dbReference type="GO" id="GO:0006427">
    <property type="term" value="P:histidyl-tRNA aminoacylation"/>
    <property type="evidence" value="ECO:0007669"/>
    <property type="project" value="UniProtKB-UniRule"/>
</dbReference>
<dbReference type="CDD" id="cd00773">
    <property type="entry name" value="HisRS-like_core"/>
    <property type="match status" value="1"/>
</dbReference>
<dbReference type="CDD" id="cd00859">
    <property type="entry name" value="HisRS_anticodon"/>
    <property type="match status" value="1"/>
</dbReference>
<dbReference type="FunFam" id="3.30.930.10:FF:000152">
    <property type="entry name" value="Histidine--tRNA ligase"/>
    <property type="match status" value="1"/>
</dbReference>
<dbReference type="Gene3D" id="3.40.50.800">
    <property type="entry name" value="Anticodon-binding domain"/>
    <property type="match status" value="1"/>
</dbReference>
<dbReference type="Gene3D" id="3.30.930.10">
    <property type="entry name" value="Bira Bifunctional Protein, Domain 2"/>
    <property type="match status" value="1"/>
</dbReference>
<dbReference type="HAMAP" id="MF_00127">
    <property type="entry name" value="His_tRNA_synth"/>
    <property type="match status" value="1"/>
</dbReference>
<dbReference type="InterPro" id="IPR006195">
    <property type="entry name" value="aa-tRNA-synth_II"/>
</dbReference>
<dbReference type="InterPro" id="IPR045864">
    <property type="entry name" value="aa-tRNA-synth_II/BPL/LPL"/>
</dbReference>
<dbReference type="InterPro" id="IPR004154">
    <property type="entry name" value="Anticodon-bd"/>
</dbReference>
<dbReference type="InterPro" id="IPR036621">
    <property type="entry name" value="Anticodon-bd_dom_sf"/>
</dbReference>
<dbReference type="InterPro" id="IPR015807">
    <property type="entry name" value="His-tRNA-ligase"/>
</dbReference>
<dbReference type="InterPro" id="IPR041715">
    <property type="entry name" value="HisRS-like_core"/>
</dbReference>
<dbReference type="InterPro" id="IPR004516">
    <property type="entry name" value="HisRS/HisZ"/>
</dbReference>
<dbReference type="InterPro" id="IPR033656">
    <property type="entry name" value="HisRS_anticodon"/>
</dbReference>
<dbReference type="NCBIfam" id="TIGR00442">
    <property type="entry name" value="hisS"/>
    <property type="match status" value="1"/>
</dbReference>
<dbReference type="PANTHER" id="PTHR11476:SF7">
    <property type="entry name" value="HISTIDINE--TRNA LIGASE"/>
    <property type="match status" value="1"/>
</dbReference>
<dbReference type="PANTHER" id="PTHR11476">
    <property type="entry name" value="HISTIDYL-TRNA SYNTHETASE"/>
    <property type="match status" value="1"/>
</dbReference>
<dbReference type="Pfam" id="PF03129">
    <property type="entry name" value="HGTP_anticodon"/>
    <property type="match status" value="1"/>
</dbReference>
<dbReference type="Pfam" id="PF13393">
    <property type="entry name" value="tRNA-synt_His"/>
    <property type="match status" value="1"/>
</dbReference>
<dbReference type="PIRSF" id="PIRSF001549">
    <property type="entry name" value="His-tRNA_synth"/>
    <property type="match status" value="1"/>
</dbReference>
<dbReference type="SUPFAM" id="SSF52954">
    <property type="entry name" value="Class II aaRS ABD-related"/>
    <property type="match status" value="1"/>
</dbReference>
<dbReference type="SUPFAM" id="SSF55681">
    <property type="entry name" value="Class II aaRS and biotin synthetases"/>
    <property type="match status" value="1"/>
</dbReference>
<dbReference type="PROSITE" id="PS50862">
    <property type="entry name" value="AA_TRNA_LIGASE_II"/>
    <property type="match status" value="1"/>
</dbReference>
<feature type="chain" id="PRO_1000095560" description="Histidine--tRNA ligase">
    <location>
        <begin position="1"/>
        <end position="442"/>
    </location>
</feature>
<gene>
    <name evidence="1" type="primary">hisS</name>
    <name type="ordered locus">HPP12_1156</name>
</gene>
<protein>
    <recommendedName>
        <fullName evidence="1">Histidine--tRNA ligase</fullName>
        <ecNumber evidence="1">6.1.1.21</ecNumber>
    </recommendedName>
    <alternativeName>
        <fullName evidence="1">Histidyl-tRNA synthetase</fullName>
        <shortName evidence="1">HisRS</shortName>
    </alternativeName>
</protein>
<name>SYH_HELP2</name>
<proteinExistence type="inferred from homology"/>
<sequence length="442" mass="50419">MITPKVLSGFKDRLPKDAIQKAQLLAKVSVVFQSFGFVPIETPHLEYAQTLLPDTSSDIQKEIYRFKDHGDRDVALRFDLTVPLARFVSLHHQILGMPFKRYAIGNVFRGERAQKGRYREFTQCDFDFIGSESLVCDAEIIQVIIASLKALDLEDFCVSINHRKILNGICEYFRISQVNEALRIVDKLEKIGLDGVEEELKKECDLNSNTIKELLEMVQIKQNDLSHAEFFEKIAYLKDYNENLKKGIQDLERLYQLLGDLQISQNLYKIDFSIARGLGYYTGIVYETTLNEMKSLGSVCSGGRYDHLTKNFSKENLQGVGASIGIDRLIVALSEMQLLDERSTQAKVLIACMHEEYFSYANRLAESLRQSGIFSEVYPEAQKIKKPFSYANHRGHEFVAVIGEEEFKSETLSLKNMHSGMQLNCLSFLKALEIIGENDEDL</sequence>
<reference key="1">
    <citation type="submission" date="2008-10" db="EMBL/GenBank/DDBJ databases">
        <title>The complete genome sequence of Helicobacter pylori strain P12.</title>
        <authorList>
            <person name="Fischer W."/>
            <person name="Windhager L."/>
            <person name="Karnholz A."/>
            <person name="Zeiller M."/>
            <person name="Zimmer R."/>
            <person name="Haas R."/>
        </authorList>
    </citation>
    <scope>NUCLEOTIDE SEQUENCE [LARGE SCALE GENOMIC DNA]</scope>
    <source>
        <strain>P12</strain>
    </source>
</reference>
<evidence type="ECO:0000255" key="1">
    <source>
        <dbReference type="HAMAP-Rule" id="MF_00127"/>
    </source>
</evidence>
<comment type="catalytic activity">
    <reaction evidence="1">
        <text>tRNA(His) + L-histidine + ATP = L-histidyl-tRNA(His) + AMP + diphosphate + H(+)</text>
        <dbReference type="Rhea" id="RHEA:17313"/>
        <dbReference type="Rhea" id="RHEA-COMP:9665"/>
        <dbReference type="Rhea" id="RHEA-COMP:9689"/>
        <dbReference type="ChEBI" id="CHEBI:15378"/>
        <dbReference type="ChEBI" id="CHEBI:30616"/>
        <dbReference type="ChEBI" id="CHEBI:33019"/>
        <dbReference type="ChEBI" id="CHEBI:57595"/>
        <dbReference type="ChEBI" id="CHEBI:78442"/>
        <dbReference type="ChEBI" id="CHEBI:78527"/>
        <dbReference type="ChEBI" id="CHEBI:456215"/>
        <dbReference type="EC" id="6.1.1.21"/>
    </reaction>
</comment>
<comment type="subunit">
    <text evidence="1">Homodimer.</text>
</comment>
<comment type="subcellular location">
    <subcellularLocation>
        <location evidence="1">Cytoplasm</location>
    </subcellularLocation>
</comment>
<comment type="similarity">
    <text evidence="1">Belongs to the class-II aminoacyl-tRNA synthetase family.</text>
</comment>
<organism>
    <name type="scientific">Helicobacter pylori (strain P12)</name>
    <dbReference type="NCBI Taxonomy" id="570508"/>
    <lineage>
        <taxon>Bacteria</taxon>
        <taxon>Pseudomonadati</taxon>
        <taxon>Campylobacterota</taxon>
        <taxon>Epsilonproteobacteria</taxon>
        <taxon>Campylobacterales</taxon>
        <taxon>Helicobacteraceae</taxon>
        <taxon>Helicobacter</taxon>
    </lineage>
</organism>
<keyword id="KW-0030">Aminoacyl-tRNA synthetase</keyword>
<keyword id="KW-0067">ATP-binding</keyword>
<keyword id="KW-0963">Cytoplasm</keyword>
<keyword id="KW-0436">Ligase</keyword>
<keyword id="KW-0547">Nucleotide-binding</keyword>
<keyword id="KW-0648">Protein biosynthesis</keyword>
<accession>B6JN30</accession>